<sequence>MTQTVNVIGAGLAGSEAAYQLAERGIKVNLIEMRPVKQTPAHHTDKFAELVCSNSLRGNALTNGVGVLKEEMRRLNSIIIEAADKARVPAGGALAVDRHDFSGYITETLKNHENITVINEEINAIPDGYTIIATGPLTTETLAQEIVDITGKDQLYFYDAAAPIIEKESIDMDKVYLKSRYDKGEAAYLNCPMTEDEFNRFYDAVLEAEVAPVNSFEKEKYFEGCMPFEVMAERGRKTLLFGPMKPVGLEDPKTGKRPYAVVQLRQDDAAGTLYNIVGFQTHLKWGAQKEVIKLIPGLENVDIVRYGVMHRNTFINSPDVLNEKYELISQPNIQFAGQMTGVEGYVESAASGLVAGINLAHKILGKGEVVFPRETMIGSMAYYISHAKNNKNFQPMNANFGLLPSLETRIKDKKERYEAQANRALDYLENFKKTL</sequence>
<name>TRMFO_STAA1</name>
<keyword id="KW-0963">Cytoplasm</keyword>
<keyword id="KW-0274">FAD</keyword>
<keyword id="KW-0285">Flavoprotein</keyword>
<keyword id="KW-0489">Methyltransferase</keyword>
<keyword id="KW-0520">NAD</keyword>
<keyword id="KW-0521">NADP</keyword>
<keyword id="KW-0808">Transferase</keyword>
<keyword id="KW-0819">tRNA processing</keyword>
<reference key="1">
    <citation type="journal article" date="2008" name="Antimicrob. Agents Chemother.">
        <title>Mutated response regulator graR is responsible for phenotypic conversion of Staphylococcus aureus from heterogeneous vancomycin-intermediate resistance to vancomycin-intermediate resistance.</title>
        <authorList>
            <person name="Neoh H.-M."/>
            <person name="Cui L."/>
            <person name="Yuzawa H."/>
            <person name="Takeuchi F."/>
            <person name="Matsuo M."/>
            <person name="Hiramatsu K."/>
        </authorList>
    </citation>
    <scope>NUCLEOTIDE SEQUENCE [LARGE SCALE GENOMIC DNA]</scope>
    <source>
        <strain>Mu3 / ATCC 700698</strain>
    </source>
</reference>
<protein>
    <recommendedName>
        <fullName evidence="1">Methylenetetrahydrofolate--tRNA-(uracil-5-)-methyltransferase TrmFO</fullName>
        <ecNumber evidence="1">2.1.1.74</ecNumber>
    </recommendedName>
    <alternativeName>
        <fullName evidence="1">Folate-dependent tRNA (uracil-5-)-methyltransferase</fullName>
    </alternativeName>
    <alternativeName>
        <fullName evidence="1">Folate-dependent tRNA(M-5-U54)-methyltransferase</fullName>
    </alternativeName>
</protein>
<gene>
    <name evidence="1" type="primary">trmFO</name>
    <name type="synonym">gid</name>
    <name type="ordered locus">SAHV_1241</name>
</gene>
<feature type="chain" id="PRO_1000063930" description="Methylenetetrahydrofolate--tRNA-(uracil-5-)-methyltransferase TrmFO">
    <location>
        <begin position="1"/>
        <end position="435"/>
    </location>
</feature>
<feature type="binding site" evidence="1">
    <location>
        <begin position="9"/>
        <end position="14"/>
    </location>
    <ligand>
        <name>FAD</name>
        <dbReference type="ChEBI" id="CHEBI:57692"/>
    </ligand>
</feature>
<accession>A7X1M6</accession>
<organism>
    <name type="scientific">Staphylococcus aureus (strain Mu3 / ATCC 700698)</name>
    <dbReference type="NCBI Taxonomy" id="418127"/>
    <lineage>
        <taxon>Bacteria</taxon>
        <taxon>Bacillati</taxon>
        <taxon>Bacillota</taxon>
        <taxon>Bacilli</taxon>
        <taxon>Bacillales</taxon>
        <taxon>Staphylococcaceae</taxon>
        <taxon>Staphylococcus</taxon>
    </lineage>
</organism>
<evidence type="ECO:0000255" key="1">
    <source>
        <dbReference type="HAMAP-Rule" id="MF_01037"/>
    </source>
</evidence>
<comment type="function">
    <text evidence="1">Catalyzes the folate-dependent formation of 5-methyl-uridine at position 54 (M-5-U54) in all tRNAs.</text>
</comment>
<comment type="catalytic activity">
    <reaction evidence="1">
        <text>uridine(54) in tRNA + (6R)-5,10-methylene-5,6,7,8-tetrahydrofolate + NADH + H(+) = 5-methyluridine(54) in tRNA + (6S)-5,6,7,8-tetrahydrofolate + NAD(+)</text>
        <dbReference type="Rhea" id="RHEA:16873"/>
        <dbReference type="Rhea" id="RHEA-COMP:10167"/>
        <dbReference type="Rhea" id="RHEA-COMP:10193"/>
        <dbReference type="ChEBI" id="CHEBI:15378"/>
        <dbReference type="ChEBI" id="CHEBI:15636"/>
        <dbReference type="ChEBI" id="CHEBI:57453"/>
        <dbReference type="ChEBI" id="CHEBI:57540"/>
        <dbReference type="ChEBI" id="CHEBI:57945"/>
        <dbReference type="ChEBI" id="CHEBI:65315"/>
        <dbReference type="ChEBI" id="CHEBI:74447"/>
        <dbReference type="EC" id="2.1.1.74"/>
    </reaction>
</comment>
<comment type="catalytic activity">
    <reaction evidence="1">
        <text>uridine(54) in tRNA + (6R)-5,10-methylene-5,6,7,8-tetrahydrofolate + NADPH + H(+) = 5-methyluridine(54) in tRNA + (6S)-5,6,7,8-tetrahydrofolate + NADP(+)</text>
        <dbReference type="Rhea" id="RHEA:62372"/>
        <dbReference type="Rhea" id="RHEA-COMP:10167"/>
        <dbReference type="Rhea" id="RHEA-COMP:10193"/>
        <dbReference type="ChEBI" id="CHEBI:15378"/>
        <dbReference type="ChEBI" id="CHEBI:15636"/>
        <dbReference type="ChEBI" id="CHEBI:57453"/>
        <dbReference type="ChEBI" id="CHEBI:57783"/>
        <dbReference type="ChEBI" id="CHEBI:58349"/>
        <dbReference type="ChEBI" id="CHEBI:65315"/>
        <dbReference type="ChEBI" id="CHEBI:74447"/>
        <dbReference type="EC" id="2.1.1.74"/>
    </reaction>
</comment>
<comment type="cofactor">
    <cofactor evidence="1">
        <name>FAD</name>
        <dbReference type="ChEBI" id="CHEBI:57692"/>
    </cofactor>
</comment>
<comment type="subcellular location">
    <subcellularLocation>
        <location evidence="1">Cytoplasm</location>
    </subcellularLocation>
</comment>
<comment type="similarity">
    <text evidence="1">Belongs to the MnmG family. TrmFO subfamily.</text>
</comment>
<dbReference type="EC" id="2.1.1.74" evidence="1"/>
<dbReference type="EMBL" id="AP009324">
    <property type="protein sequence ID" value="BAF78124.1"/>
    <property type="molecule type" value="Genomic_DNA"/>
</dbReference>
<dbReference type="RefSeq" id="WP_000195254.1">
    <property type="nucleotide sequence ID" value="NZ_CTYB01000004.1"/>
</dbReference>
<dbReference type="SMR" id="A7X1M6"/>
<dbReference type="KEGG" id="saw:SAHV_1241"/>
<dbReference type="HOGENOM" id="CLU_033057_1_0_9"/>
<dbReference type="GO" id="GO:0005829">
    <property type="term" value="C:cytosol"/>
    <property type="evidence" value="ECO:0007669"/>
    <property type="project" value="TreeGrafter"/>
</dbReference>
<dbReference type="GO" id="GO:0050660">
    <property type="term" value="F:flavin adenine dinucleotide binding"/>
    <property type="evidence" value="ECO:0007669"/>
    <property type="project" value="UniProtKB-UniRule"/>
</dbReference>
<dbReference type="GO" id="GO:0047151">
    <property type="term" value="F:tRNA (uracil(54)-C5)-methyltransferase activity, 5,10-methylenetetrahydrofolate-dependent"/>
    <property type="evidence" value="ECO:0007669"/>
    <property type="project" value="UniProtKB-UniRule"/>
</dbReference>
<dbReference type="GO" id="GO:0030488">
    <property type="term" value="P:tRNA methylation"/>
    <property type="evidence" value="ECO:0007669"/>
    <property type="project" value="TreeGrafter"/>
</dbReference>
<dbReference type="GO" id="GO:0002098">
    <property type="term" value="P:tRNA wobble uridine modification"/>
    <property type="evidence" value="ECO:0007669"/>
    <property type="project" value="TreeGrafter"/>
</dbReference>
<dbReference type="FunFam" id="3.50.50.60:FF:000035">
    <property type="entry name" value="Methylenetetrahydrofolate--tRNA-(uracil-5-)-methyltransferase TrmFO"/>
    <property type="match status" value="1"/>
</dbReference>
<dbReference type="FunFam" id="3.50.50.60:FF:000040">
    <property type="entry name" value="Methylenetetrahydrofolate--tRNA-(uracil-5-)-methyltransferase TrmFO"/>
    <property type="match status" value="1"/>
</dbReference>
<dbReference type="Gene3D" id="3.50.50.60">
    <property type="entry name" value="FAD/NAD(P)-binding domain"/>
    <property type="match status" value="2"/>
</dbReference>
<dbReference type="HAMAP" id="MF_01037">
    <property type="entry name" value="TrmFO"/>
    <property type="match status" value="1"/>
</dbReference>
<dbReference type="InterPro" id="IPR036188">
    <property type="entry name" value="FAD/NAD-bd_sf"/>
</dbReference>
<dbReference type="InterPro" id="IPR002218">
    <property type="entry name" value="MnmG-rel"/>
</dbReference>
<dbReference type="InterPro" id="IPR020595">
    <property type="entry name" value="MnmG-rel_CS"/>
</dbReference>
<dbReference type="InterPro" id="IPR040131">
    <property type="entry name" value="MnmG_N"/>
</dbReference>
<dbReference type="InterPro" id="IPR004417">
    <property type="entry name" value="TrmFO"/>
</dbReference>
<dbReference type="NCBIfam" id="TIGR00137">
    <property type="entry name" value="gid_trmFO"/>
    <property type="match status" value="1"/>
</dbReference>
<dbReference type="NCBIfam" id="NF003739">
    <property type="entry name" value="PRK05335.1"/>
    <property type="match status" value="1"/>
</dbReference>
<dbReference type="PANTHER" id="PTHR11806">
    <property type="entry name" value="GLUCOSE INHIBITED DIVISION PROTEIN A"/>
    <property type="match status" value="1"/>
</dbReference>
<dbReference type="PANTHER" id="PTHR11806:SF2">
    <property type="entry name" value="METHYLENETETRAHYDROFOLATE--TRNA-(URACIL-5-)-METHYLTRANSFERASE TRMFO"/>
    <property type="match status" value="1"/>
</dbReference>
<dbReference type="Pfam" id="PF01134">
    <property type="entry name" value="GIDA"/>
    <property type="match status" value="1"/>
</dbReference>
<dbReference type="SUPFAM" id="SSF51905">
    <property type="entry name" value="FAD/NAD(P)-binding domain"/>
    <property type="match status" value="1"/>
</dbReference>
<dbReference type="PROSITE" id="PS01281">
    <property type="entry name" value="GIDA_2"/>
    <property type="match status" value="1"/>
</dbReference>
<proteinExistence type="inferred from homology"/>